<reference key="1">
    <citation type="submission" date="2000-05" db="EMBL/GenBank/DDBJ databases">
        <title>Structural analysis of Arabidopsis thaliana chromosome 5. XI.</title>
        <authorList>
            <person name="Kaneko T."/>
            <person name="Katoh T."/>
            <person name="Asamizu E."/>
            <person name="Sato S."/>
            <person name="Nakamura Y."/>
            <person name="Kotani H."/>
            <person name="Tabata S."/>
        </authorList>
    </citation>
    <scope>NUCLEOTIDE SEQUENCE [LARGE SCALE GENOMIC DNA]</scope>
</reference>
<reference key="2">
    <citation type="journal article" date="2017" name="Plant J.">
        <title>Araport11: a complete reannotation of the Arabidopsis thaliana reference genome.</title>
        <authorList>
            <person name="Cheng C.Y."/>
            <person name="Krishnakumar V."/>
            <person name="Chan A.P."/>
            <person name="Thibaud-Nissen F."/>
            <person name="Schobel S."/>
            <person name="Town C.D."/>
        </authorList>
    </citation>
    <scope>GENOME REANNOTATION</scope>
    <source>
        <strain>cv. Columbia</strain>
    </source>
</reference>
<reference key="3">
    <citation type="submission" date="2006-07" db="EMBL/GenBank/DDBJ databases">
        <title>Large-scale analysis of RIKEN Arabidopsis full-length (RAFL) cDNAs.</title>
        <authorList>
            <person name="Totoki Y."/>
            <person name="Seki M."/>
            <person name="Ishida J."/>
            <person name="Nakajima M."/>
            <person name="Enju A."/>
            <person name="Kamiya A."/>
            <person name="Narusaka M."/>
            <person name="Shin-i T."/>
            <person name="Nakagawa M."/>
            <person name="Sakamoto N."/>
            <person name="Oishi K."/>
            <person name="Kohara Y."/>
            <person name="Kobayashi M."/>
            <person name="Toyoda A."/>
            <person name="Sakaki Y."/>
            <person name="Sakurai T."/>
            <person name="Iida K."/>
            <person name="Akiyama K."/>
            <person name="Satou M."/>
            <person name="Toyoda T."/>
            <person name="Konagaya A."/>
            <person name="Carninci P."/>
            <person name="Kawai J."/>
            <person name="Hayashizaki Y."/>
            <person name="Shinozaki K."/>
        </authorList>
    </citation>
    <scope>NUCLEOTIDE SEQUENCE [LARGE SCALE MRNA] (ISOFORM 1)</scope>
    <source>
        <strain>cv. Columbia</strain>
    </source>
</reference>
<reference key="4">
    <citation type="submission" date="2004-05" db="EMBL/GenBank/DDBJ databases">
        <title>Arabidopsis ORF clones.</title>
        <authorList>
            <person name="Cheuk R."/>
            <person name="Chen H."/>
            <person name="Kim C.J."/>
            <person name="Shinn P."/>
            <person name="Carninci P."/>
            <person name="Hayashizaki Y."/>
            <person name="Ishida J."/>
            <person name="Kamiya A."/>
            <person name="Kawai J."/>
            <person name="Narusaka M."/>
            <person name="Sakurai T."/>
            <person name="Satou M."/>
            <person name="Seki M."/>
            <person name="Shinozaki K."/>
            <person name="Ecker J.R."/>
        </authorList>
    </citation>
    <scope>NUCLEOTIDE SEQUENCE [LARGE SCALE MRNA] OF 2-375 (ISOFORM 1)</scope>
    <source>
        <strain>cv. Columbia</strain>
    </source>
</reference>
<reference key="5">
    <citation type="journal article" date="2001" name="Genes Dev.">
        <title>A conserved MYB transcription factor involved in phosphate starvation signaling both in vascular plants and in unicellular algae.</title>
        <authorList>
            <person name="Rubio V."/>
            <person name="Linhares F."/>
            <person name="Solano R."/>
            <person name="Martin A.C."/>
            <person name="Iglesias J."/>
            <person name="Leyva A."/>
            <person name="Paz-Ares J."/>
        </authorList>
    </citation>
    <scope>GENE FAMILY</scope>
</reference>
<comment type="subcellular location">
    <subcellularLocation>
        <location evidence="2">Nucleus</location>
    </subcellularLocation>
</comment>
<comment type="alternative products">
    <event type="alternative splicing"/>
    <isoform>
        <id>Q0WVU3-1</id>
        <name>1</name>
        <sequence type="displayed"/>
    </isoform>
    <isoform>
        <id>Q0WVU3-2</id>
        <name>2</name>
        <sequence type="described" ref="VSP_058431 VSP_058432"/>
    </isoform>
</comment>
<comment type="similarity">
    <text evidence="4">Belongs to the MYB-CC family.</text>
</comment>
<comment type="sequence caution" evidence="4">
    <conflict type="erroneous initiation">
        <sequence resource="EMBL-CDS" id="BAB09814"/>
    </conflict>
    <text>Truncated N-terminus.</text>
</comment>
<proteinExistence type="evidence at transcript level"/>
<protein>
    <recommendedName>
        <fullName evidence="4">Myb family transcription factor PHL5</fullName>
    </recommendedName>
    <alternativeName>
        <fullName evidence="4">Protein PHR1-LIKE 5</fullName>
    </alternativeName>
</protein>
<organism evidence="7">
    <name type="scientific">Arabidopsis thaliana</name>
    <name type="common">Mouse-ear cress</name>
    <dbReference type="NCBI Taxonomy" id="3702"/>
    <lineage>
        <taxon>Eukaryota</taxon>
        <taxon>Viridiplantae</taxon>
        <taxon>Streptophyta</taxon>
        <taxon>Embryophyta</taxon>
        <taxon>Tracheophyta</taxon>
        <taxon>Spermatophyta</taxon>
        <taxon>Magnoliopsida</taxon>
        <taxon>eudicotyledons</taxon>
        <taxon>Gunneridae</taxon>
        <taxon>Pentapetalae</taxon>
        <taxon>rosids</taxon>
        <taxon>malvids</taxon>
        <taxon>Brassicales</taxon>
        <taxon>Brassicaceae</taxon>
        <taxon>Camelineae</taxon>
        <taxon>Arabidopsis</taxon>
    </lineage>
</organism>
<sequence>MMDNINFEFSNASQGSRLQLQQQPPQPFNLQDLNMIQYNQPSSPWTTETFSGLTPYDCTANQSFPVQCSSSKPYPSSFHPYHHQSSDSPSLDQSVSMIPMQPLPDQYMKPLYQRSCSNDFAATNASSASYSLSFEASHDPQELCRRTYSNSNVTHLNFTSSQHQPKQSHPRFSSPPSFSIHGGSMAPNCVNKTRIRWTQDLHEKFVECVNRLGGADKATPKAILKRMDSDGLTIFHVKSHLQKYRIAKYMPESQEGKFEKRACAKELSQLDTRTGVQIKEALQLQLDVQRHLHEQLEIQRNLQLRIEEQGKQLKMMMEQQQKNKESLLKKLPDAEASLSLLDPHIHSPPSPFLVHDAEALMLTSYEDTQLQSTKS</sequence>
<keyword id="KW-0025">Alternative splicing</keyword>
<keyword id="KW-0175">Coiled coil</keyword>
<keyword id="KW-0238">DNA-binding</keyword>
<keyword id="KW-0539">Nucleus</keyword>
<keyword id="KW-1185">Reference proteome</keyword>
<keyword id="KW-0804">Transcription</keyword>
<keyword id="KW-0805">Transcription regulation</keyword>
<evidence type="ECO:0000255" key="1"/>
<evidence type="ECO:0000255" key="2">
    <source>
        <dbReference type="PROSITE-ProRule" id="PRU00625"/>
    </source>
</evidence>
<evidence type="ECO:0000256" key="3">
    <source>
        <dbReference type="SAM" id="MobiDB-lite"/>
    </source>
</evidence>
<evidence type="ECO:0000305" key="4"/>
<evidence type="ECO:0000312" key="5">
    <source>
        <dbReference type="Araport" id="AT5G06800"/>
    </source>
</evidence>
<evidence type="ECO:0000312" key="6">
    <source>
        <dbReference type="EMBL" id="BAB09814.1"/>
    </source>
</evidence>
<evidence type="ECO:0000312" key="7">
    <source>
        <dbReference type="EMBL" id="BAE98755.1"/>
    </source>
</evidence>
<feature type="chain" id="PRO_0000436862" description="Myb family transcription factor PHL5">
    <location>
        <begin position="1"/>
        <end position="375"/>
    </location>
</feature>
<feature type="domain" description="HTH myb-type" evidence="2">
    <location>
        <begin position="189"/>
        <end position="249"/>
    </location>
</feature>
<feature type="DNA-binding region" description="H-T-H motif" evidence="2">
    <location>
        <begin position="220"/>
        <end position="245"/>
    </location>
</feature>
<feature type="region of interest" description="Disordered" evidence="3">
    <location>
        <begin position="159"/>
        <end position="178"/>
    </location>
</feature>
<feature type="coiled-coil region" evidence="1">
    <location>
        <begin position="279"/>
        <end position="299"/>
    </location>
</feature>
<feature type="short sequence motif" description="LHEQLE" evidence="4">
    <location>
        <begin position="292"/>
        <end position="297"/>
    </location>
</feature>
<feature type="compositionally biased region" description="Polar residues" evidence="3">
    <location>
        <begin position="159"/>
        <end position="171"/>
    </location>
</feature>
<feature type="splice variant" id="VSP_058431" description="In isoform 2.">
    <original>IQRNL</original>
    <variation>VSYKM</variation>
    <location>
        <begin position="298"/>
        <end position="302"/>
    </location>
</feature>
<feature type="splice variant" id="VSP_058432" description="In isoform 2.">
    <location>
        <begin position="303"/>
        <end position="375"/>
    </location>
</feature>
<dbReference type="EMBL" id="AP002032">
    <property type="protein sequence ID" value="BAB09814.1"/>
    <property type="status" value="ALT_INIT"/>
    <property type="molecule type" value="Genomic_DNA"/>
</dbReference>
<dbReference type="EMBL" id="CP002688">
    <property type="protein sequence ID" value="AED91067.1"/>
    <property type="molecule type" value="Genomic_DNA"/>
</dbReference>
<dbReference type="EMBL" id="AK226644">
    <property type="protein sequence ID" value="BAE98755.1"/>
    <property type="molecule type" value="mRNA"/>
</dbReference>
<dbReference type="EMBL" id="BT012658">
    <property type="protein sequence ID" value="AAT06477.1"/>
    <property type="molecule type" value="mRNA"/>
</dbReference>
<dbReference type="RefSeq" id="NP_196298.2">
    <molecule id="Q0WVU3-1"/>
    <property type="nucleotide sequence ID" value="NM_120763.4"/>
</dbReference>
<dbReference type="SMR" id="Q0WVU3"/>
<dbReference type="FunCoup" id="Q0WVU3">
    <property type="interactions" value="1"/>
</dbReference>
<dbReference type="STRING" id="3702.Q0WVU3"/>
<dbReference type="iPTMnet" id="Q0WVU3"/>
<dbReference type="PaxDb" id="3702-AT5G06800.1"/>
<dbReference type="EnsemblPlants" id="AT5G06800.1">
    <molecule id="Q0WVU3-1"/>
    <property type="protein sequence ID" value="AT5G06800.1"/>
    <property type="gene ID" value="AT5G06800"/>
</dbReference>
<dbReference type="GeneID" id="830570"/>
<dbReference type="Gramene" id="AT5G06800.1">
    <molecule id="Q0WVU3-1"/>
    <property type="protein sequence ID" value="AT5G06800.1"/>
    <property type="gene ID" value="AT5G06800"/>
</dbReference>
<dbReference type="KEGG" id="ath:AT5G06800"/>
<dbReference type="Araport" id="AT5G06800"/>
<dbReference type="TAIR" id="AT5G06800"/>
<dbReference type="eggNOG" id="ENOG502QW8T">
    <property type="taxonomic scope" value="Eukaryota"/>
</dbReference>
<dbReference type="InParanoid" id="Q0WVU3"/>
<dbReference type="OrthoDB" id="551907at2759"/>
<dbReference type="PRO" id="PR:Q0WVU3"/>
<dbReference type="Proteomes" id="UP000006548">
    <property type="component" value="Chromosome 5"/>
</dbReference>
<dbReference type="ExpressionAtlas" id="Q0WVU3">
    <property type="expression patterns" value="baseline and differential"/>
</dbReference>
<dbReference type="GO" id="GO:0005634">
    <property type="term" value="C:nucleus"/>
    <property type="evidence" value="ECO:0007669"/>
    <property type="project" value="UniProtKB-SubCell"/>
</dbReference>
<dbReference type="GO" id="GO:0003677">
    <property type="term" value="F:DNA binding"/>
    <property type="evidence" value="ECO:0007669"/>
    <property type="project" value="UniProtKB-KW"/>
</dbReference>
<dbReference type="GO" id="GO:0003700">
    <property type="term" value="F:DNA-binding transcription factor activity"/>
    <property type="evidence" value="ECO:0000250"/>
    <property type="project" value="TAIR"/>
</dbReference>
<dbReference type="GO" id="GO:0006355">
    <property type="term" value="P:regulation of DNA-templated transcription"/>
    <property type="evidence" value="ECO:0000304"/>
    <property type="project" value="TAIR"/>
</dbReference>
<dbReference type="FunFam" id="1.10.10.60:FF:000002">
    <property type="entry name" value="Myb family transcription factor"/>
    <property type="match status" value="1"/>
</dbReference>
<dbReference type="Gene3D" id="1.10.10.60">
    <property type="entry name" value="Homeodomain-like"/>
    <property type="match status" value="1"/>
</dbReference>
<dbReference type="InterPro" id="IPR009057">
    <property type="entry name" value="Homeodomain-like_sf"/>
</dbReference>
<dbReference type="InterPro" id="IPR025756">
    <property type="entry name" value="Myb_CC_LHEQLE"/>
</dbReference>
<dbReference type="InterPro" id="IPR017930">
    <property type="entry name" value="Myb_dom"/>
</dbReference>
<dbReference type="InterPro" id="IPR006447">
    <property type="entry name" value="Myb_dom_plants"/>
</dbReference>
<dbReference type="InterPro" id="IPR046955">
    <property type="entry name" value="PHR1-like"/>
</dbReference>
<dbReference type="InterPro" id="IPR001005">
    <property type="entry name" value="SANT/Myb"/>
</dbReference>
<dbReference type="NCBIfam" id="TIGR01557">
    <property type="entry name" value="myb_SHAQKYF"/>
    <property type="match status" value="1"/>
</dbReference>
<dbReference type="PANTHER" id="PTHR31499">
    <property type="entry name" value="MYB FAMILY TRANSCRIPTION FACTOR PHL11"/>
    <property type="match status" value="1"/>
</dbReference>
<dbReference type="PANTHER" id="PTHR31499:SF85">
    <property type="entry name" value="TRANSCRIPTION FACTOR MYB-RELATED FAMILY"/>
    <property type="match status" value="1"/>
</dbReference>
<dbReference type="Pfam" id="PF14379">
    <property type="entry name" value="Myb_CC_LHEQLE"/>
    <property type="match status" value="1"/>
</dbReference>
<dbReference type="Pfam" id="PF00249">
    <property type="entry name" value="Myb_DNA-binding"/>
    <property type="match status" value="1"/>
</dbReference>
<dbReference type="SUPFAM" id="SSF46689">
    <property type="entry name" value="Homeodomain-like"/>
    <property type="match status" value="1"/>
</dbReference>
<dbReference type="PROSITE" id="PS51294">
    <property type="entry name" value="HTH_MYB"/>
    <property type="match status" value="1"/>
</dbReference>
<accession>Q0WVU3</accession>
<accession>F4K587</accession>
<accession>Q9FG27</accession>
<gene>
    <name evidence="4" type="primary">PHL5</name>
    <name evidence="5" type="ordered locus">At5g06800</name>
    <name evidence="6" type="ORF">MPH15.16</name>
</gene>
<name>PHL5_ARATH</name>